<accession>D2Y249</accession>
<organism>
    <name type="scientific">Cyriopagopus hainanus</name>
    <name type="common">Chinese bird spider</name>
    <name type="synonym">Haplopelma hainanum</name>
    <dbReference type="NCBI Taxonomy" id="209901"/>
    <lineage>
        <taxon>Eukaryota</taxon>
        <taxon>Metazoa</taxon>
        <taxon>Ecdysozoa</taxon>
        <taxon>Arthropoda</taxon>
        <taxon>Chelicerata</taxon>
        <taxon>Arachnida</taxon>
        <taxon>Araneae</taxon>
        <taxon>Mygalomorphae</taxon>
        <taxon>Theraphosidae</taxon>
        <taxon>Haplopelma</taxon>
    </lineage>
</organism>
<keyword id="KW-0903">Direct protein sequencing</keyword>
<keyword id="KW-1015">Disulfide bond</keyword>
<keyword id="KW-0872">Ion channel impairing toxin</keyword>
<keyword id="KW-0960">Knottin</keyword>
<keyword id="KW-0964">Secreted</keyword>
<keyword id="KW-0732">Signal</keyword>
<keyword id="KW-0800">Toxin</keyword>
<sequence length="87" mass="10154">MVNMKASMFLTFAGLVLLFVVCYASESEKKEFPKEMLSSIFAVDNDFKQEERDCAGYMRECKEKLCCSGYVCSSRWKWCVLPAPWRR</sequence>
<reference key="1">
    <citation type="journal article" date="2010" name="J. Proteome Res.">
        <title>Molecular diversification of peptide toxins from the tarantula Haplopelma hainanum (Ornithoctonus hainana) venom based on transcriptomic, peptidomic, and genomic analyses.</title>
        <authorList>
            <person name="Tang X."/>
            <person name="Zhang Y."/>
            <person name="Hu W."/>
            <person name="Xu D."/>
            <person name="Tao H."/>
            <person name="Yang X."/>
            <person name="Li Y."/>
            <person name="Jiang L."/>
            <person name="Liang S."/>
        </authorList>
    </citation>
    <scope>NUCLEOTIDE SEQUENCE [LARGE SCALE MRNA]</scope>
    <scope>PROTEIN SEQUENCE OF 53-85</scope>
    <scope>IDENTIFICATION BY MASS SPECTROMETRY</scope>
    <source>
        <tissue>Venom</tissue>
        <tissue>Venom gland</tissue>
    </source>
</reference>
<comment type="function">
    <text evidence="1">Ion channel inhibitor.</text>
</comment>
<comment type="subcellular location">
    <subcellularLocation>
        <location>Secreted</location>
    </subcellularLocation>
</comment>
<comment type="tissue specificity">
    <text>Expressed by the venom gland.</text>
</comment>
<comment type="domain">
    <text evidence="1">The presence of a 'disulfide through disulfide knot' structurally defines this protein as a knottin.</text>
</comment>
<comment type="similarity">
    <text evidence="5">Belongs to the neurotoxin 10 (Hwtx-1) family. 51 (Hntx-8) subfamily. Hntx-8 sub-subfamily.</text>
</comment>
<feature type="signal peptide" evidence="3">
    <location>
        <begin position="1"/>
        <end position="24"/>
    </location>
</feature>
<feature type="propeptide" id="PRO_0000400589" evidence="4">
    <location>
        <begin position="25"/>
        <end position="52"/>
    </location>
</feature>
<feature type="peptide" id="PRO_0000400590" description="U3-theraphotoxin-Hhn1a 6">
    <location>
        <begin position="53"/>
        <end position="87"/>
    </location>
</feature>
<feature type="disulfide bond" evidence="2">
    <location>
        <begin position="54"/>
        <end position="67"/>
    </location>
</feature>
<feature type="disulfide bond" evidence="2">
    <location>
        <begin position="61"/>
        <end position="72"/>
    </location>
</feature>
<feature type="disulfide bond" evidence="2">
    <location>
        <begin position="66"/>
        <end position="79"/>
    </location>
</feature>
<dbReference type="EMBL" id="GU292926">
    <property type="protein sequence ID" value="ADB56742.1"/>
    <property type="molecule type" value="mRNA"/>
</dbReference>
<dbReference type="SMR" id="D2Y249"/>
<dbReference type="ArachnoServer" id="AS001657">
    <property type="toxin name" value="U3-theraphotoxin-Hhn1a"/>
</dbReference>
<dbReference type="GO" id="GO:0005576">
    <property type="term" value="C:extracellular region"/>
    <property type="evidence" value="ECO:0007669"/>
    <property type="project" value="UniProtKB-SubCell"/>
</dbReference>
<dbReference type="GO" id="GO:0008200">
    <property type="term" value="F:ion channel inhibitor activity"/>
    <property type="evidence" value="ECO:0007669"/>
    <property type="project" value="InterPro"/>
</dbReference>
<dbReference type="GO" id="GO:0090729">
    <property type="term" value="F:toxin activity"/>
    <property type="evidence" value="ECO:0007669"/>
    <property type="project" value="UniProtKB-KW"/>
</dbReference>
<dbReference type="InterPro" id="IPR011696">
    <property type="entry name" value="Huwentoxin-1"/>
</dbReference>
<dbReference type="InterPro" id="IPR013140">
    <property type="entry name" value="Huwentoxin_CS1"/>
</dbReference>
<dbReference type="Pfam" id="PF07740">
    <property type="entry name" value="Toxin_12"/>
    <property type="match status" value="1"/>
</dbReference>
<dbReference type="SUPFAM" id="SSF57059">
    <property type="entry name" value="omega toxin-like"/>
    <property type="match status" value="1"/>
</dbReference>
<dbReference type="PROSITE" id="PS60021">
    <property type="entry name" value="HWTX_1"/>
    <property type="match status" value="1"/>
</dbReference>
<protein>
    <recommendedName>
        <fullName>U3-theraphotoxin-Hhn1a 6</fullName>
        <shortName>U3-TRTX-Hhn1a</shortName>
    </recommendedName>
    <alternativeName>
        <fullName>Hainantoxin-VIII.6</fullName>
        <shortName>HNTX-VIII.6</shortName>
    </alternativeName>
    <alternativeName>
        <fullName>Peptide F4-27.90</fullName>
    </alternativeName>
</protein>
<proteinExistence type="evidence at protein level"/>
<evidence type="ECO:0000250" key="1"/>
<evidence type="ECO:0000250" key="2">
    <source>
        <dbReference type="UniProtKB" id="B3FIS6"/>
    </source>
</evidence>
<evidence type="ECO:0000255" key="3"/>
<evidence type="ECO:0000269" key="4">
    <source>
    </source>
</evidence>
<evidence type="ECO:0000305" key="5"/>
<name>H8A06_CYRHA</name>